<protein>
    <recommendedName>
        <fullName>Uncharacterized N-acetyltransferase ABC2369</fullName>
        <ecNumber>2.3.1.-</ecNumber>
    </recommendedName>
</protein>
<sequence>MTIKVERLLVNYKTLEEFRHFREYGAAELSMKDDLKNSIIENDSESPFYGIYYGKKLVARMSLYKIDGNFDRYFDPPQDYLELWKLEVLEPYRGRGYGRALVDFAKSFGLPVKTNARQSTGEFWNKLGFEPITYNEARDRGESPYVWFPQGVQEQTTKPEQARAE</sequence>
<feature type="chain" id="PRO_0000232475" description="Uncharacterized N-acetyltransferase ABC2369">
    <location>
        <begin position="1"/>
        <end position="165"/>
    </location>
</feature>
<feature type="domain" description="N-acetyltransferase">
    <location>
        <begin position="8"/>
        <end position="159"/>
    </location>
</feature>
<dbReference type="EC" id="2.3.1.-"/>
<dbReference type="EMBL" id="AP006627">
    <property type="protein sequence ID" value="BAD64904.1"/>
    <property type="molecule type" value="Genomic_DNA"/>
</dbReference>
<dbReference type="RefSeq" id="WP_011247212.1">
    <property type="nucleotide sequence ID" value="NC_006582.1"/>
</dbReference>
<dbReference type="SMR" id="Q5WFF6"/>
<dbReference type="STRING" id="66692.ABC2369"/>
<dbReference type="KEGG" id="bcl:ABC2369"/>
<dbReference type="eggNOG" id="COG0454">
    <property type="taxonomic scope" value="Bacteria"/>
</dbReference>
<dbReference type="HOGENOM" id="CLU_136634_0_0_9"/>
<dbReference type="OrthoDB" id="2242710at2"/>
<dbReference type="Proteomes" id="UP000001168">
    <property type="component" value="Chromosome"/>
</dbReference>
<dbReference type="GO" id="GO:0016747">
    <property type="term" value="F:acyltransferase activity, transferring groups other than amino-acyl groups"/>
    <property type="evidence" value="ECO:0007669"/>
    <property type="project" value="UniProtKB-UniRule"/>
</dbReference>
<dbReference type="CDD" id="cd04301">
    <property type="entry name" value="NAT_SF"/>
    <property type="match status" value="1"/>
</dbReference>
<dbReference type="Gene3D" id="3.40.630.30">
    <property type="match status" value="1"/>
</dbReference>
<dbReference type="HAMAP" id="MF_00824">
    <property type="entry name" value="Acetyltransf_YlbP"/>
    <property type="match status" value="1"/>
</dbReference>
<dbReference type="InterPro" id="IPR016181">
    <property type="entry name" value="Acyl_CoA_acyltransferase"/>
</dbReference>
<dbReference type="InterPro" id="IPR000182">
    <property type="entry name" value="GNAT_dom"/>
</dbReference>
<dbReference type="InterPro" id="IPR017274">
    <property type="entry name" value="YlbP"/>
</dbReference>
<dbReference type="NCBIfam" id="NF010241">
    <property type="entry name" value="PRK13688.1"/>
    <property type="match status" value="1"/>
</dbReference>
<dbReference type="Pfam" id="PF00583">
    <property type="entry name" value="Acetyltransf_1"/>
    <property type="match status" value="1"/>
</dbReference>
<dbReference type="PIRSF" id="PIRSF037732">
    <property type="entry name" value="YlbP_prd"/>
    <property type="match status" value="1"/>
</dbReference>
<dbReference type="SUPFAM" id="SSF55729">
    <property type="entry name" value="Acyl-CoA N-acyltransferases (Nat)"/>
    <property type="match status" value="1"/>
</dbReference>
<dbReference type="PROSITE" id="PS51186">
    <property type="entry name" value="GNAT"/>
    <property type="match status" value="1"/>
</dbReference>
<gene>
    <name type="ordered locus">ABC2369</name>
</gene>
<proteinExistence type="inferred from homology"/>
<keyword id="KW-0012">Acyltransferase</keyword>
<keyword id="KW-1185">Reference proteome</keyword>
<keyword id="KW-0808">Transferase</keyword>
<organism>
    <name type="scientific">Shouchella clausii (strain KSM-K16)</name>
    <name type="common">Alkalihalobacillus clausii</name>
    <dbReference type="NCBI Taxonomy" id="66692"/>
    <lineage>
        <taxon>Bacteria</taxon>
        <taxon>Bacillati</taxon>
        <taxon>Bacillota</taxon>
        <taxon>Bacilli</taxon>
        <taxon>Bacillales</taxon>
        <taxon>Bacillaceae</taxon>
        <taxon>Shouchella</taxon>
    </lineage>
</organism>
<accession>Q5WFF6</accession>
<reference key="1">
    <citation type="submission" date="2003-10" db="EMBL/GenBank/DDBJ databases">
        <title>The complete genome sequence of the alkaliphilic Bacillus clausii KSM-K16.</title>
        <authorList>
            <person name="Takaki Y."/>
            <person name="Kageyama Y."/>
            <person name="Shimamura S."/>
            <person name="Suzuki H."/>
            <person name="Nishi S."/>
            <person name="Hatada Y."/>
            <person name="Kawai S."/>
            <person name="Ito S."/>
            <person name="Horikoshi K."/>
        </authorList>
    </citation>
    <scope>NUCLEOTIDE SEQUENCE [LARGE SCALE GENOMIC DNA]</scope>
    <source>
        <strain>KSM-K16</strain>
    </source>
</reference>
<name>Y2369_SHOC1</name>